<feature type="chain" id="PRO_0000211389" description="Monocarboxylate transporter 2">
    <location>
        <begin position="1"/>
        <end position="489"/>
    </location>
</feature>
<feature type="topological domain" description="Cytoplasmic" evidence="11">
    <location>
        <begin position="1"/>
        <end position="21"/>
    </location>
</feature>
<feature type="transmembrane region" description="Helical; Name=1" evidence="4">
    <location>
        <begin position="22"/>
        <end position="42"/>
    </location>
</feature>
<feature type="topological domain" description="Extracellular" evidence="11">
    <location>
        <begin position="43"/>
        <end position="65"/>
    </location>
</feature>
<feature type="transmembrane region" description="Helical; Name=2" evidence="4">
    <location>
        <begin position="66"/>
        <end position="86"/>
    </location>
</feature>
<feature type="topological domain" description="Cytoplasmic" evidence="11">
    <location>
        <begin position="87"/>
        <end position="95"/>
    </location>
</feature>
<feature type="transmembrane region" description="Helical; Name=3" evidence="4">
    <location>
        <begin position="96"/>
        <end position="116"/>
    </location>
</feature>
<feature type="topological domain" description="Extracellular" evidence="11">
    <location>
        <begin position="117"/>
        <end position="121"/>
    </location>
</feature>
<feature type="transmembrane region" description="Helical; Name=4" evidence="4">
    <location>
        <begin position="122"/>
        <end position="142"/>
    </location>
</feature>
<feature type="topological domain" description="Cytoplasmic" evidence="11">
    <location>
        <begin position="143"/>
        <end position="154"/>
    </location>
</feature>
<feature type="transmembrane region" description="Helical; Name=5" evidence="4">
    <location>
        <begin position="155"/>
        <end position="175"/>
    </location>
</feature>
<feature type="topological domain" description="Extracellular" evidence="11">
    <location>
        <begin position="176"/>
        <end position="179"/>
    </location>
</feature>
<feature type="transmembrane region" description="Helical; Name=6" evidence="4">
    <location>
        <begin position="180"/>
        <end position="200"/>
    </location>
</feature>
<feature type="topological domain" description="Cytoplasmic" evidence="11">
    <location>
        <begin position="201"/>
        <end position="250"/>
    </location>
</feature>
<feature type="transmembrane region" description="Helical; Name=7" evidence="4">
    <location>
        <begin position="251"/>
        <end position="271"/>
    </location>
</feature>
<feature type="topological domain" description="Extracellular" evidence="11">
    <location>
        <begin position="272"/>
        <end position="286"/>
    </location>
</feature>
<feature type="transmembrane region" description="Helical; Name=8" evidence="4">
    <location>
        <begin position="287"/>
        <end position="307"/>
    </location>
</feature>
<feature type="topological domain" description="Cytoplasmic" evidence="11">
    <location>
        <begin position="308"/>
        <end position="316"/>
    </location>
</feature>
<feature type="transmembrane region" description="Helical; Name=9" evidence="4">
    <location>
        <begin position="317"/>
        <end position="337"/>
    </location>
</feature>
<feature type="topological domain" description="Extracellular" evidence="11">
    <location>
        <begin position="338"/>
        <end position="342"/>
    </location>
</feature>
<feature type="transmembrane region" description="Helical; Name=10" evidence="4">
    <location>
        <begin position="343"/>
        <end position="363"/>
    </location>
</feature>
<feature type="topological domain" description="Cytoplasmic" evidence="11">
    <location>
        <begin position="364"/>
        <end position="377"/>
    </location>
</feature>
<feature type="transmembrane region" description="Helical; Name=11" evidence="4">
    <location>
        <begin position="378"/>
        <end position="398"/>
    </location>
</feature>
<feature type="topological domain" description="Extracellular" evidence="11">
    <location>
        <begin position="399"/>
        <end position="410"/>
    </location>
</feature>
<feature type="transmembrane region" description="Helical; Name=12" evidence="4">
    <location>
        <begin position="411"/>
        <end position="431"/>
    </location>
</feature>
<feature type="topological domain" description="Cytoplasmic" evidence="11">
    <location>
        <begin position="432"/>
        <end position="489"/>
    </location>
</feature>
<feature type="region of interest" description="Disordered" evidence="5">
    <location>
        <begin position="206"/>
        <end position="227"/>
    </location>
</feature>
<feature type="region of interest" description="Disordered" evidence="5">
    <location>
        <begin position="441"/>
        <end position="489"/>
    </location>
</feature>
<feature type="compositionally biased region" description="Basic and acidic residues" evidence="5">
    <location>
        <begin position="456"/>
        <end position="470"/>
    </location>
</feature>
<feature type="compositionally biased region" description="Basic and acidic residues" evidence="5">
    <location>
        <begin position="480"/>
        <end position="489"/>
    </location>
</feature>
<feature type="site" description="May be protonated during monocarboxylate transport" evidence="1">
    <location>
        <position position="297"/>
    </location>
</feature>
<feature type="sequence conflict" description="In Ref. 1; CAA66074." evidence="11" ref="1">
    <original>V</original>
    <variation>L</variation>
    <location>
        <position position="95"/>
    </location>
</feature>
<feature type="sequence conflict" description="In Ref. 2; AAB04023." evidence="11" ref="2">
    <original>F</original>
    <variation>P</variation>
    <location>
        <position position="392"/>
    </location>
</feature>
<evidence type="ECO:0000250" key="1">
    <source>
        <dbReference type="UniProtKB" id="O60669"/>
    </source>
</evidence>
<evidence type="ECO:0000250" key="2">
    <source>
        <dbReference type="UniProtKB" id="O70451"/>
    </source>
</evidence>
<evidence type="ECO:0000250" key="3">
    <source>
        <dbReference type="UniProtKB" id="P53988"/>
    </source>
</evidence>
<evidence type="ECO:0000255" key="4"/>
<evidence type="ECO:0000256" key="5">
    <source>
        <dbReference type="SAM" id="MobiDB-lite"/>
    </source>
</evidence>
<evidence type="ECO:0000269" key="6">
    <source>
    </source>
</evidence>
<evidence type="ECO:0000269" key="7">
    <source>
    </source>
</evidence>
<evidence type="ECO:0000269" key="8">
    <source>
    </source>
</evidence>
<evidence type="ECO:0000269" key="9">
    <source>
    </source>
</evidence>
<evidence type="ECO:0000269" key="10">
    <source>
    </source>
</evidence>
<evidence type="ECO:0000305" key="11"/>
<comment type="function">
    <text evidence="1 6 8">Proton-coupled monocarboxylate symporter. Catalyzes the rapid transport across the plasma membrane of monocarboxylates such as L-lactate, pyruvate and ketone bodies, acetoacetate, beta-hydroxybutyrate and acetate (PubMed:10417314, PubMed:20695846). Dimerization is functionally required and both subunits work cooperatively in transporting substrate (By similarity).</text>
</comment>
<comment type="catalytic activity">
    <reaction evidence="6">
        <text>3-methyl-2-oxobutanoate(out) + H(+)(out) = 3-methyl-2-oxobutanoate(in) + H(+)(in)</text>
        <dbReference type="Rhea" id="RHEA:71783"/>
        <dbReference type="ChEBI" id="CHEBI:11851"/>
        <dbReference type="ChEBI" id="CHEBI:15378"/>
    </reaction>
</comment>
<comment type="catalytic activity">
    <reaction evidence="6 8">
        <text>(S)-lactate(in) + H(+)(in) = (S)-lactate(out) + H(+)(out)</text>
        <dbReference type="Rhea" id="RHEA:29415"/>
        <dbReference type="ChEBI" id="CHEBI:15378"/>
        <dbReference type="ChEBI" id="CHEBI:16651"/>
    </reaction>
</comment>
<comment type="catalytic activity">
    <reaction evidence="6">
        <text>acetoacetate(out) + H(+)(out) = acetoacetate(in) + H(+)(in)</text>
        <dbReference type="Rhea" id="RHEA:71775"/>
        <dbReference type="ChEBI" id="CHEBI:13705"/>
        <dbReference type="ChEBI" id="CHEBI:15378"/>
    </reaction>
</comment>
<comment type="catalytic activity">
    <reaction evidence="6">
        <text>(R)-3-hydroxybutanoate(out) + H(+)(out) = (R)-3-hydroxybutanoate(in) + H(+)(in)</text>
        <dbReference type="Rhea" id="RHEA:71795"/>
        <dbReference type="ChEBI" id="CHEBI:10983"/>
        <dbReference type="ChEBI" id="CHEBI:15378"/>
    </reaction>
</comment>
<comment type="catalytic activity">
    <reaction evidence="6">
        <text>4-methyl-2-oxopentanoate(out) + H(+)(out) = 4-methyl-2-oxopentanoate(in) + H(+)(in)</text>
        <dbReference type="Rhea" id="RHEA:71779"/>
        <dbReference type="ChEBI" id="CHEBI:15378"/>
        <dbReference type="ChEBI" id="CHEBI:17865"/>
    </reaction>
</comment>
<comment type="catalytic activity">
    <reaction evidence="6">
        <text>pyruvate(out) + H(+)(out) = pyruvate(in) + H(+)(in)</text>
        <dbReference type="Rhea" id="RHEA:64720"/>
        <dbReference type="ChEBI" id="CHEBI:15361"/>
        <dbReference type="ChEBI" id="CHEBI:15378"/>
    </reaction>
    <physiologicalReaction direction="left-to-right" evidence="1">
        <dbReference type="Rhea" id="RHEA:64721"/>
    </physiologicalReaction>
    <physiologicalReaction direction="right-to-left" evidence="1">
        <dbReference type="Rhea" id="RHEA:64722"/>
    </physiologicalReaction>
</comment>
<comment type="catalytic activity">
    <reaction evidence="6">
        <text>(S)-3-hydroxybutanoate(out) + H(+)(out) = (S)-3-hydroxybutanoate(in) + H(+)(in)</text>
        <dbReference type="Rhea" id="RHEA:71871"/>
        <dbReference type="ChEBI" id="CHEBI:11047"/>
        <dbReference type="ChEBI" id="CHEBI:15378"/>
    </reaction>
</comment>
<comment type="activity regulation">
    <text evidence="8">Transport activity exhibits steep dependence on substrate concentration. Substrate concentration sensitivity of SLC16A7 arises from the strong inter-subunit cooperativity of the SLC16A7 dimer during transport. Inhibited by AR-C155858.</text>
</comment>
<comment type="biophysicochemical properties">
    <kinetics>
        <KM evidence="6">0.48 mM for (S)-lactate (at pH 6)</KM>
        <KM evidence="8">1 mM for (S)-lactate</KM>
        <KM evidence="6">0.74 mM for (S)-lactate (at pH 7)</KM>
    </kinetics>
</comment>
<comment type="subunit">
    <text evidence="1 2 7 8">Homodimer (By similarity). Interacts with GRID2IP (By similarity). Interacts with EMB; interaction mediates SLC16A7 targeting to the plasma membrane (PubMed:15917240, PubMed:20695846). Interacts with isoform 2 of BSG (By similarity).</text>
</comment>
<comment type="subcellular location">
    <subcellularLocation>
        <location evidence="7 8 9 10">Cell membrane</location>
        <topology evidence="1">Multi-pass membrane protein</topology>
    </subcellularLocation>
    <subcellularLocation>
        <location evidence="3">Basolateral cell membrane</location>
        <topology evidence="1">Multi-pass membrane protein</topology>
    </subcellularLocation>
    <subcellularLocation>
        <location evidence="2">Cytoplasm</location>
    </subcellularLocation>
    <text evidence="2 7 8">Requires the ancillary protein, EMB for plasma membrane localization (PubMed:15917240, PubMed:20695846). Colocalizes with BSG in spermatozoa. Detected in the cytoplasm of Sertoli cells (By similarity).</text>
</comment>
<comment type="tissue specificity">
    <text evidence="10">Detected in brain and kidney (at protein level).</text>
</comment>
<comment type="similarity">
    <text evidence="11">Belongs to the major facilitator superfamily. Monocarboxylate porter (TC 2.A.1.13) family.</text>
</comment>
<name>MOT2_RAT</name>
<accession>Q63344</accession>
<accession>Q63649</accession>
<accession>Q66HS9</accession>
<protein>
    <recommendedName>
        <fullName>Monocarboxylate transporter 2</fullName>
        <shortName>MCT 2</shortName>
    </recommendedName>
    <alternativeName>
        <fullName>Solute carrier family 16 member 7</fullName>
    </alternativeName>
</protein>
<keyword id="KW-1003">Cell membrane</keyword>
<keyword id="KW-0963">Cytoplasm</keyword>
<keyword id="KW-0472">Membrane</keyword>
<keyword id="KW-1185">Reference proteome</keyword>
<keyword id="KW-0769">Symport</keyword>
<keyword id="KW-0812">Transmembrane</keyword>
<keyword id="KW-1133">Transmembrane helix</keyword>
<keyword id="KW-0813">Transport</keyword>
<sequence>MPSESSVKATAAPPPFPLPPDGGWGWVVVCASFISIGFSYAFPKAVTVFFNDIKDIFKTTSSQIAWISSIMLAVMYAGGPISSVLVNNYGSRPVVIVGGLLCCTGMILASFSSSVIELYLTVGFIGGLGLAFNLQPALTIIGKYFYRKRPLANGFAMAGSPVFLSTLAPFNQFLFNSYGWKGSFLILGAIFLHSCVAGCLMRPVGPSPRAAKSKSKVGSRQDSSTKRLSKVSTAEKINRFLDFGLFTHRGFLIYLSGNVVLFLGMFAPIIFLAPYAKDKGVDDYNSAFLLSVMAFTDMFARPSVGLIANTSLIRPRIQYLFSVAIMFTGICHLLCPLAHSYTALVVYVIFFGIGFGSISSLLFECLMDQVGASRFSSAVGLVTIVECCPVLFGPPLAGKLLDITGQYKYLYIASGIVVLSSGIYLLICNAINYRLLEKERKREKARRKKSASQASKEMEALSRSKQDDVTVKVSNTHNPPSDRDKESSI</sequence>
<gene>
    <name type="primary">Slc16a7</name>
    <name type="synonym">Mct2</name>
</gene>
<proteinExistence type="evidence at protein level"/>
<reference key="1">
    <citation type="journal article" date="1997" name="Biochem. J.">
        <title>Cloning of the monocarboxylate transporter isoform MCT2 from rat testis provides evidence that expression in tissues is species-specific and may involve post-transcriptional regulation.</title>
        <authorList>
            <person name="Jackson V.N."/>
            <person name="Price N.T."/>
            <person name="Carpenter L."/>
            <person name="Halestrap A.P."/>
        </authorList>
    </citation>
    <scope>NUCLEOTIDE SEQUENCE [MRNA]</scope>
    <scope>SUBCELLULAR LOCATION</scope>
    <source>
        <strain>Sprague-Dawley</strain>
        <tissue>Testis</tissue>
    </source>
</reference>
<reference key="2">
    <citation type="journal article" date="1998" name="Glia">
        <title>Expression of the monocarboxylate transporter MCT2 by rat brain glia.</title>
        <authorList>
            <person name="Gerhart D.Z."/>
            <person name="Enerson B.E."/>
            <person name="Zhdankina O.Y."/>
            <person name="Leino R.L."/>
            <person name="Drewes L.R."/>
        </authorList>
    </citation>
    <scope>NUCLEOTIDE SEQUENCE [MRNA]</scope>
    <scope>SUBCELLULAR LOCATION</scope>
    <scope>TISSUE SPECIFICITY</scope>
    <source>
        <strain>Wistar</strain>
        <tissue>Brain</tissue>
    </source>
</reference>
<reference key="3">
    <citation type="journal article" date="2004" name="Nature">
        <title>Genome sequence of the Brown Norway rat yields insights into mammalian evolution.</title>
        <authorList>
            <person name="Gibbs R.A."/>
            <person name="Weinstock G.M."/>
            <person name="Metzker M.L."/>
            <person name="Muzny D.M."/>
            <person name="Sodergren E.J."/>
            <person name="Scherer S."/>
            <person name="Scott G."/>
            <person name="Steffen D."/>
            <person name="Worley K.C."/>
            <person name="Burch P.E."/>
            <person name="Okwuonu G."/>
            <person name="Hines S."/>
            <person name="Lewis L."/>
            <person name="Deramo C."/>
            <person name="Delgado O."/>
            <person name="Dugan-Rocha S."/>
            <person name="Miner G."/>
            <person name="Morgan M."/>
            <person name="Hawes A."/>
            <person name="Gill R."/>
            <person name="Holt R.A."/>
            <person name="Adams M.D."/>
            <person name="Amanatides P.G."/>
            <person name="Baden-Tillson H."/>
            <person name="Barnstead M."/>
            <person name="Chin S."/>
            <person name="Evans C.A."/>
            <person name="Ferriera S."/>
            <person name="Fosler C."/>
            <person name="Glodek A."/>
            <person name="Gu Z."/>
            <person name="Jennings D."/>
            <person name="Kraft C.L."/>
            <person name="Nguyen T."/>
            <person name="Pfannkoch C.M."/>
            <person name="Sitter C."/>
            <person name="Sutton G.G."/>
            <person name="Venter J.C."/>
            <person name="Woodage T."/>
            <person name="Smith D."/>
            <person name="Lee H.-M."/>
            <person name="Gustafson E."/>
            <person name="Cahill P."/>
            <person name="Kana A."/>
            <person name="Doucette-Stamm L."/>
            <person name="Weinstock K."/>
            <person name="Fechtel K."/>
            <person name="Weiss R.B."/>
            <person name="Dunn D.M."/>
            <person name="Green E.D."/>
            <person name="Blakesley R.W."/>
            <person name="Bouffard G.G."/>
            <person name="De Jong P.J."/>
            <person name="Osoegawa K."/>
            <person name="Zhu B."/>
            <person name="Marra M."/>
            <person name="Schein J."/>
            <person name="Bosdet I."/>
            <person name="Fjell C."/>
            <person name="Jones S."/>
            <person name="Krzywinski M."/>
            <person name="Mathewson C."/>
            <person name="Siddiqui A."/>
            <person name="Wye N."/>
            <person name="McPherson J."/>
            <person name="Zhao S."/>
            <person name="Fraser C.M."/>
            <person name="Shetty J."/>
            <person name="Shatsman S."/>
            <person name="Geer K."/>
            <person name="Chen Y."/>
            <person name="Abramzon S."/>
            <person name="Nierman W.C."/>
            <person name="Havlak P.H."/>
            <person name="Chen R."/>
            <person name="Durbin K.J."/>
            <person name="Egan A."/>
            <person name="Ren Y."/>
            <person name="Song X.-Z."/>
            <person name="Li B."/>
            <person name="Liu Y."/>
            <person name="Qin X."/>
            <person name="Cawley S."/>
            <person name="Cooney A.J."/>
            <person name="D'Souza L.M."/>
            <person name="Martin K."/>
            <person name="Wu J.Q."/>
            <person name="Gonzalez-Garay M.L."/>
            <person name="Jackson A.R."/>
            <person name="Kalafus K.J."/>
            <person name="McLeod M.P."/>
            <person name="Milosavljevic A."/>
            <person name="Virk D."/>
            <person name="Volkov A."/>
            <person name="Wheeler D.A."/>
            <person name="Zhang Z."/>
            <person name="Bailey J.A."/>
            <person name="Eichler E.E."/>
            <person name="Tuzun E."/>
            <person name="Birney E."/>
            <person name="Mongin E."/>
            <person name="Ureta-Vidal A."/>
            <person name="Woodwark C."/>
            <person name="Zdobnov E."/>
            <person name="Bork P."/>
            <person name="Suyama M."/>
            <person name="Torrents D."/>
            <person name="Alexandersson M."/>
            <person name="Trask B.J."/>
            <person name="Young J.M."/>
            <person name="Huang H."/>
            <person name="Wang H."/>
            <person name="Xing H."/>
            <person name="Daniels S."/>
            <person name="Gietzen D."/>
            <person name="Schmidt J."/>
            <person name="Stevens K."/>
            <person name="Vitt U."/>
            <person name="Wingrove J."/>
            <person name="Camara F."/>
            <person name="Mar Alba M."/>
            <person name="Abril J.F."/>
            <person name="Guigo R."/>
            <person name="Smit A."/>
            <person name="Dubchak I."/>
            <person name="Rubin E.M."/>
            <person name="Couronne O."/>
            <person name="Poliakov A."/>
            <person name="Huebner N."/>
            <person name="Ganten D."/>
            <person name="Goesele C."/>
            <person name="Hummel O."/>
            <person name="Kreitler T."/>
            <person name="Lee Y.-A."/>
            <person name="Monti J."/>
            <person name="Schulz H."/>
            <person name="Zimdahl H."/>
            <person name="Himmelbauer H."/>
            <person name="Lehrach H."/>
            <person name="Jacob H.J."/>
            <person name="Bromberg S."/>
            <person name="Gullings-Handley J."/>
            <person name="Jensen-Seaman M.I."/>
            <person name="Kwitek A.E."/>
            <person name="Lazar J."/>
            <person name="Pasko D."/>
            <person name="Tonellato P.J."/>
            <person name="Twigger S."/>
            <person name="Ponting C.P."/>
            <person name="Duarte J.M."/>
            <person name="Rice S."/>
            <person name="Goodstadt L."/>
            <person name="Beatson S.A."/>
            <person name="Emes R.D."/>
            <person name="Winter E.E."/>
            <person name="Webber C."/>
            <person name="Brandt P."/>
            <person name="Nyakatura G."/>
            <person name="Adetobi M."/>
            <person name="Chiaromonte F."/>
            <person name="Elnitski L."/>
            <person name="Eswara P."/>
            <person name="Hardison R.C."/>
            <person name="Hou M."/>
            <person name="Kolbe D."/>
            <person name="Makova K."/>
            <person name="Miller W."/>
            <person name="Nekrutenko A."/>
            <person name="Riemer C."/>
            <person name="Schwartz S."/>
            <person name="Taylor J."/>
            <person name="Yang S."/>
            <person name="Zhang Y."/>
            <person name="Lindpaintner K."/>
            <person name="Andrews T.D."/>
            <person name="Caccamo M."/>
            <person name="Clamp M."/>
            <person name="Clarke L."/>
            <person name="Curwen V."/>
            <person name="Durbin R.M."/>
            <person name="Eyras E."/>
            <person name="Searle S.M."/>
            <person name="Cooper G.M."/>
            <person name="Batzoglou S."/>
            <person name="Brudno M."/>
            <person name="Sidow A."/>
            <person name="Stone E.A."/>
            <person name="Payseur B.A."/>
            <person name="Bourque G."/>
            <person name="Lopez-Otin C."/>
            <person name="Puente X.S."/>
            <person name="Chakrabarti K."/>
            <person name="Chatterji S."/>
            <person name="Dewey C."/>
            <person name="Pachter L."/>
            <person name="Bray N."/>
            <person name="Yap V.B."/>
            <person name="Caspi A."/>
            <person name="Tesler G."/>
            <person name="Pevzner P.A."/>
            <person name="Haussler D."/>
            <person name="Roskin K.M."/>
            <person name="Baertsch R."/>
            <person name="Clawson H."/>
            <person name="Furey T.S."/>
            <person name="Hinrichs A.S."/>
            <person name="Karolchik D."/>
            <person name="Kent W.J."/>
            <person name="Rosenbloom K.R."/>
            <person name="Trumbower H."/>
            <person name="Weirauch M."/>
            <person name="Cooper D.N."/>
            <person name="Stenson P.D."/>
            <person name="Ma B."/>
            <person name="Brent M."/>
            <person name="Arumugam M."/>
            <person name="Shteynberg D."/>
            <person name="Copley R.R."/>
            <person name="Taylor M.S."/>
            <person name="Riethman H."/>
            <person name="Mudunuri U."/>
            <person name="Peterson J."/>
            <person name="Guyer M."/>
            <person name="Felsenfeld A."/>
            <person name="Old S."/>
            <person name="Mockrin S."/>
            <person name="Collins F.S."/>
        </authorList>
    </citation>
    <scope>NUCLEOTIDE SEQUENCE [LARGE SCALE GENOMIC DNA]</scope>
    <source>
        <strain>Brown Norway</strain>
    </source>
</reference>
<reference key="4">
    <citation type="journal article" date="2004" name="Genome Res.">
        <title>The status, quality, and expansion of the NIH full-length cDNA project: the Mammalian Gene Collection (MGC).</title>
        <authorList>
            <consortium name="The MGC Project Team"/>
        </authorList>
    </citation>
    <scope>NUCLEOTIDE SEQUENCE [LARGE SCALE MRNA]</scope>
    <source>
        <tissue>Kidney</tissue>
    </source>
</reference>
<reference key="5">
    <citation type="journal article" date="1999" name="Biochem. J.">
        <title>Characterization of the high-affinity monocarboxylate transporter MCT2 in Xenopus laevis oocytes.</title>
        <authorList>
            <person name="Broeer S."/>
            <person name="Broeer A."/>
            <person name="Schneider H.P."/>
            <person name="Stegen C."/>
            <person name="Halestrap A.P."/>
            <person name="Deitmer J.W."/>
        </authorList>
    </citation>
    <scope>FUNCTION</scope>
    <scope>TRANSPORTER ACTIVITY</scope>
    <scope>BIOPHYSICOCHEMICAL PROPERTIES</scope>
</reference>
<reference key="6">
    <citation type="journal article" date="2005" name="J. Biol. Chem.">
        <title>Basigin (CD147) is the target for organomercurial inhibition of monocarboxylate transporter isoforms 1 and 4: the ancillary protein for the insensitive MCT2 is EMBIGIN (gp70).</title>
        <authorList>
            <person name="Wilson M.C."/>
            <person name="Meredith D."/>
            <person name="Fox J.E."/>
            <person name="Manoharan C."/>
            <person name="Davies A.J."/>
            <person name="Halestrap A.P."/>
        </authorList>
    </citation>
    <scope>INTERACTION WITH EMB</scope>
    <scope>SUBCELLULAR LOCATION</scope>
</reference>
<reference key="7">
    <citation type="journal article" date="2010" name="Biochem. J.">
        <title>The inhibition of monocarboxylate transporter 2 (MCT2) by AR-C155858 is modulated by the associated ancillary protein.</title>
        <authorList>
            <person name="Ovens M.J."/>
            <person name="Manoharan C."/>
            <person name="Wilson M.C."/>
            <person name="Murray C.M."/>
            <person name="Halestrap A.P."/>
        </authorList>
    </citation>
    <scope>INTERACTION WITH EMB</scope>
    <scope>SUBCELLULAR LOCATION</scope>
    <scope>FUNCTION</scope>
    <scope>TRANSPORTER ACTIVITY</scope>
    <scope>ACTIVITY REGULATION</scope>
</reference>
<reference key="8">
    <citation type="journal article" date="2012" name="Nat. Commun.">
        <title>Quantitative maps of protein phosphorylation sites across 14 different rat organs and tissues.</title>
        <authorList>
            <person name="Lundby A."/>
            <person name="Secher A."/>
            <person name="Lage K."/>
            <person name="Nordsborg N.B."/>
            <person name="Dmytriyev A."/>
            <person name="Lundby C."/>
            <person name="Olsen J.V."/>
        </authorList>
    </citation>
    <scope>IDENTIFICATION BY MASS SPECTROMETRY [LARGE SCALE ANALYSIS]</scope>
</reference>
<organism>
    <name type="scientific">Rattus norvegicus</name>
    <name type="common">Rat</name>
    <dbReference type="NCBI Taxonomy" id="10116"/>
    <lineage>
        <taxon>Eukaryota</taxon>
        <taxon>Metazoa</taxon>
        <taxon>Chordata</taxon>
        <taxon>Craniata</taxon>
        <taxon>Vertebrata</taxon>
        <taxon>Euteleostomi</taxon>
        <taxon>Mammalia</taxon>
        <taxon>Eutheria</taxon>
        <taxon>Euarchontoglires</taxon>
        <taxon>Glires</taxon>
        <taxon>Rodentia</taxon>
        <taxon>Myomorpha</taxon>
        <taxon>Muroidea</taxon>
        <taxon>Muridae</taxon>
        <taxon>Murinae</taxon>
        <taxon>Rattus</taxon>
    </lineage>
</organism>
<dbReference type="EMBL" id="X97445">
    <property type="protein sequence ID" value="CAA66074.1"/>
    <property type="molecule type" value="mRNA"/>
</dbReference>
<dbReference type="EMBL" id="U62316">
    <property type="protein sequence ID" value="AAB04023.1"/>
    <property type="molecule type" value="mRNA"/>
</dbReference>
<dbReference type="EMBL" id="CH473950">
    <property type="protein sequence ID" value="EDM16524.1"/>
    <property type="molecule type" value="Genomic_DNA"/>
</dbReference>
<dbReference type="EMBL" id="CH473950">
    <property type="protein sequence ID" value="EDM16525.1"/>
    <property type="molecule type" value="Genomic_DNA"/>
</dbReference>
<dbReference type="EMBL" id="BC081701">
    <property type="protein sequence ID" value="AAH81701.1"/>
    <property type="molecule type" value="mRNA"/>
</dbReference>
<dbReference type="RefSeq" id="NP_058998.2">
    <property type="nucleotide sequence ID" value="NM_017302.2"/>
</dbReference>
<dbReference type="RefSeq" id="XP_006241494.1">
    <property type="nucleotide sequence ID" value="XM_006241432.5"/>
</dbReference>
<dbReference type="RefSeq" id="XP_006241495.1">
    <property type="nucleotide sequence ID" value="XM_006241433.5"/>
</dbReference>
<dbReference type="RefSeq" id="XP_006241496.1">
    <property type="nucleotide sequence ID" value="XM_006241434.5"/>
</dbReference>
<dbReference type="RefSeq" id="XP_006241497.1">
    <property type="nucleotide sequence ID" value="XM_006241435.5"/>
</dbReference>
<dbReference type="RefSeq" id="XP_006241498.1">
    <property type="nucleotide sequence ID" value="XM_006241436.5"/>
</dbReference>
<dbReference type="RefSeq" id="XP_006241499.1">
    <property type="nucleotide sequence ID" value="XM_006241437.3"/>
</dbReference>
<dbReference type="RefSeq" id="XP_038934539.1">
    <property type="nucleotide sequence ID" value="XM_039078611.2"/>
</dbReference>
<dbReference type="RefSeq" id="XP_038934540.1">
    <property type="nucleotide sequence ID" value="XM_039078612.2"/>
</dbReference>
<dbReference type="RefSeq" id="XP_038934541.1">
    <property type="nucleotide sequence ID" value="XM_039078613.2"/>
</dbReference>
<dbReference type="RefSeq" id="XP_038934542.1">
    <property type="nucleotide sequence ID" value="XM_039078614.2"/>
</dbReference>
<dbReference type="RefSeq" id="XP_038934543.1">
    <property type="nucleotide sequence ID" value="XM_039078615.2"/>
</dbReference>
<dbReference type="RefSeq" id="XP_063119208.1">
    <property type="nucleotide sequence ID" value="XM_063263138.1"/>
</dbReference>
<dbReference type="RefSeq" id="XP_063119209.1">
    <property type="nucleotide sequence ID" value="XM_063263139.1"/>
</dbReference>
<dbReference type="RefSeq" id="XP_063119210.1">
    <property type="nucleotide sequence ID" value="XM_063263140.1"/>
</dbReference>
<dbReference type="SMR" id="Q63344"/>
<dbReference type="FunCoup" id="Q63344">
    <property type="interactions" value="168"/>
</dbReference>
<dbReference type="STRING" id="10116.ENSRNOP00000054845"/>
<dbReference type="BindingDB" id="Q63344"/>
<dbReference type="ChEMBL" id="CHEMBL2073718"/>
<dbReference type="iPTMnet" id="Q63344"/>
<dbReference type="PhosphoSitePlus" id="Q63344"/>
<dbReference type="PaxDb" id="10116-ENSRNOP00000054845"/>
<dbReference type="Ensembl" id="ENSRNOT00000058036.4">
    <property type="protein sequence ID" value="ENSRNOP00000054845.1"/>
    <property type="gene ID" value="ENSRNOG00000007839.8"/>
</dbReference>
<dbReference type="GeneID" id="29735"/>
<dbReference type="KEGG" id="rno:29735"/>
<dbReference type="AGR" id="RGD:3691"/>
<dbReference type="CTD" id="9194"/>
<dbReference type="RGD" id="3691">
    <property type="gene designation" value="Slc16a7"/>
</dbReference>
<dbReference type="eggNOG" id="KOG2504">
    <property type="taxonomic scope" value="Eukaryota"/>
</dbReference>
<dbReference type="GeneTree" id="ENSGT00940000157309"/>
<dbReference type="HOGENOM" id="CLU_001265_59_1_1"/>
<dbReference type="InParanoid" id="Q63344"/>
<dbReference type="OMA" id="IPARPIM"/>
<dbReference type="OrthoDB" id="6499973at2759"/>
<dbReference type="PhylomeDB" id="Q63344"/>
<dbReference type="TreeFam" id="TF313792"/>
<dbReference type="Reactome" id="R-RNO-433692">
    <property type="pathway name" value="Proton-coupled monocarboxylate transport"/>
</dbReference>
<dbReference type="PRO" id="PR:Q63344"/>
<dbReference type="Proteomes" id="UP000002494">
    <property type="component" value="Chromosome 7"/>
</dbReference>
<dbReference type="Proteomes" id="UP000234681">
    <property type="component" value="Chromosome 7"/>
</dbReference>
<dbReference type="Bgee" id="ENSRNOG00000007839">
    <property type="expression patterns" value="Expressed in testis and 19 other cell types or tissues"/>
</dbReference>
<dbReference type="GO" id="GO:0016323">
    <property type="term" value="C:basolateral plasma membrane"/>
    <property type="evidence" value="ECO:0000250"/>
    <property type="project" value="UniProtKB"/>
</dbReference>
<dbReference type="GO" id="GO:0005829">
    <property type="term" value="C:cytosol"/>
    <property type="evidence" value="ECO:0007669"/>
    <property type="project" value="Ensembl"/>
</dbReference>
<dbReference type="GO" id="GO:0098978">
    <property type="term" value="C:glutamatergic synapse"/>
    <property type="evidence" value="ECO:0000314"/>
    <property type="project" value="SynGO"/>
</dbReference>
<dbReference type="GO" id="GO:0098686">
    <property type="term" value="C:hippocampal mossy fiber to CA3 synapse"/>
    <property type="evidence" value="ECO:0000314"/>
    <property type="project" value="SynGO"/>
</dbReference>
<dbReference type="GO" id="GO:0005654">
    <property type="term" value="C:nucleoplasm"/>
    <property type="evidence" value="ECO:0007669"/>
    <property type="project" value="Ensembl"/>
</dbReference>
<dbReference type="GO" id="GO:0098688">
    <property type="term" value="C:parallel fiber to Purkinje cell synapse"/>
    <property type="evidence" value="ECO:0000314"/>
    <property type="project" value="SynGO"/>
</dbReference>
<dbReference type="GO" id="GO:0005886">
    <property type="term" value="C:plasma membrane"/>
    <property type="evidence" value="ECO:0000250"/>
    <property type="project" value="UniProtKB"/>
</dbReference>
<dbReference type="GO" id="GO:0098839">
    <property type="term" value="C:postsynaptic density membrane"/>
    <property type="evidence" value="ECO:0000314"/>
    <property type="project" value="SynGO"/>
</dbReference>
<dbReference type="GO" id="GO:0098685">
    <property type="term" value="C:Schaffer collateral - CA1 synapse"/>
    <property type="evidence" value="ECO:0000314"/>
    <property type="project" value="SynGO"/>
</dbReference>
<dbReference type="GO" id="GO:0042802">
    <property type="term" value="F:identical protein binding"/>
    <property type="evidence" value="ECO:0000250"/>
    <property type="project" value="UniProtKB"/>
</dbReference>
<dbReference type="GO" id="GO:0015129">
    <property type="term" value="F:lactate transmembrane transporter activity"/>
    <property type="evidence" value="ECO:0000250"/>
    <property type="project" value="UniProtKB"/>
</dbReference>
<dbReference type="GO" id="GO:0008028">
    <property type="term" value="F:monocarboxylic acid transmembrane transporter activity"/>
    <property type="evidence" value="ECO:0000304"/>
    <property type="project" value="RGD"/>
</dbReference>
<dbReference type="GO" id="GO:0050833">
    <property type="term" value="F:pyruvate transmembrane transporter activity"/>
    <property type="evidence" value="ECO:0000250"/>
    <property type="project" value="UniProtKB"/>
</dbReference>
<dbReference type="GO" id="GO:0015293">
    <property type="term" value="F:symporter activity"/>
    <property type="evidence" value="ECO:0000314"/>
    <property type="project" value="UniProtKB"/>
</dbReference>
<dbReference type="GO" id="GO:0035873">
    <property type="term" value="P:lactate transmembrane transport"/>
    <property type="evidence" value="ECO:0000250"/>
    <property type="project" value="UniProtKB"/>
</dbReference>
<dbReference type="GO" id="GO:0035879">
    <property type="term" value="P:plasma membrane lactate transport"/>
    <property type="evidence" value="ECO:0000314"/>
    <property type="project" value="RGD"/>
</dbReference>
<dbReference type="GO" id="GO:1901475">
    <property type="term" value="P:pyruvate transmembrane transport"/>
    <property type="evidence" value="ECO:0000250"/>
    <property type="project" value="UniProtKB"/>
</dbReference>
<dbReference type="FunFam" id="1.20.1250.20:FF:000030">
    <property type="entry name" value="monocarboxylate transporter 1 isoform X1"/>
    <property type="match status" value="1"/>
</dbReference>
<dbReference type="Gene3D" id="1.20.1250.20">
    <property type="entry name" value="MFS general substrate transporter like domains"/>
    <property type="match status" value="1"/>
</dbReference>
<dbReference type="InterPro" id="IPR004743">
    <property type="entry name" value="MCT"/>
</dbReference>
<dbReference type="InterPro" id="IPR011701">
    <property type="entry name" value="MFS"/>
</dbReference>
<dbReference type="InterPro" id="IPR020846">
    <property type="entry name" value="MFS_dom"/>
</dbReference>
<dbReference type="InterPro" id="IPR036259">
    <property type="entry name" value="MFS_trans_sf"/>
</dbReference>
<dbReference type="InterPro" id="IPR050327">
    <property type="entry name" value="Proton-linked_MCT"/>
</dbReference>
<dbReference type="NCBIfam" id="TIGR00892">
    <property type="entry name" value="2A0113"/>
    <property type="match status" value="1"/>
</dbReference>
<dbReference type="PANTHER" id="PTHR11360">
    <property type="entry name" value="MONOCARBOXYLATE TRANSPORTER"/>
    <property type="match status" value="1"/>
</dbReference>
<dbReference type="PANTHER" id="PTHR11360:SF25">
    <property type="entry name" value="MONOCARBOXYLATE TRANSPORTER 2"/>
    <property type="match status" value="1"/>
</dbReference>
<dbReference type="Pfam" id="PF07690">
    <property type="entry name" value="MFS_1"/>
    <property type="match status" value="1"/>
</dbReference>
<dbReference type="SUPFAM" id="SSF103473">
    <property type="entry name" value="MFS general substrate transporter"/>
    <property type="match status" value="1"/>
</dbReference>
<dbReference type="PROSITE" id="PS50850">
    <property type="entry name" value="MFS"/>
    <property type="match status" value="1"/>
</dbReference>